<dbReference type="EC" id="2.6.99.2" evidence="1"/>
<dbReference type="EMBL" id="CP001339">
    <property type="protein sequence ID" value="ACL72181.1"/>
    <property type="molecule type" value="Genomic_DNA"/>
</dbReference>
<dbReference type="RefSeq" id="WP_012637665.1">
    <property type="nucleotide sequence ID" value="NC_011901.1"/>
</dbReference>
<dbReference type="SMR" id="B8GPL4"/>
<dbReference type="STRING" id="396588.Tgr7_1095"/>
<dbReference type="KEGG" id="tgr:Tgr7_1095"/>
<dbReference type="eggNOG" id="COG0854">
    <property type="taxonomic scope" value="Bacteria"/>
</dbReference>
<dbReference type="HOGENOM" id="CLU_074563_0_0_6"/>
<dbReference type="OrthoDB" id="9806590at2"/>
<dbReference type="UniPathway" id="UPA00244">
    <property type="reaction ID" value="UER00313"/>
</dbReference>
<dbReference type="Proteomes" id="UP000002383">
    <property type="component" value="Chromosome"/>
</dbReference>
<dbReference type="GO" id="GO:0005829">
    <property type="term" value="C:cytosol"/>
    <property type="evidence" value="ECO:0007669"/>
    <property type="project" value="TreeGrafter"/>
</dbReference>
<dbReference type="GO" id="GO:0033856">
    <property type="term" value="F:pyridoxine 5'-phosphate synthase activity"/>
    <property type="evidence" value="ECO:0007669"/>
    <property type="project" value="UniProtKB-EC"/>
</dbReference>
<dbReference type="GO" id="GO:0008615">
    <property type="term" value="P:pyridoxine biosynthetic process"/>
    <property type="evidence" value="ECO:0007669"/>
    <property type="project" value="UniProtKB-UniRule"/>
</dbReference>
<dbReference type="CDD" id="cd00003">
    <property type="entry name" value="PNPsynthase"/>
    <property type="match status" value="1"/>
</dbReference>
<dbReference type="Gene3D" id="3.20.20.70">
    <property type="entry name" value="Aldolase class I"/>
    <property type="match status" value="1"/>
</dbReference>
<dbReference type="HAMAP" id="MF_00279">
    <property type="entry name" value="PdxJ"/>
    <property type="match status" value="1"/>
</dbReference>
<dbReference type="InterPro" id="IPR013785">
    <property type="entry name" value="Aldolase_TIM"/>
</dbReference>
<dbReference type="InterPro" id="IPR004569">
    <property type="entry name" value="PyrdxlP_synth_PdxJ"/>
</dbReference>
<dbReference type="InterPro" id="IPR036130">
    <property type="entry name" value="Pyridoxine-5'_phos_synth"/>
</dbReference>
<dbReference type="NCBIfam" id="TIGR00559">
    <property type="entry name" value="pdxJ"/>
    <property type="match status" value="1"/>
</dbReference>
<dbReference type="NCBIfam" id="NF003623">
    <property type="entry name" value="PRK05265.1-1"/>
    <property type="match status" value="1"/>
</dbReference>
<dbReference type="NCBIfam" id="NF003624">
    <property type="entry name" value="PRK05265.1-2"/>
    <property type="match status" value="1"/>
</dbReference>
<dbReference type="NCBIfam" id="NF003625">
    <property type="entry name" value="PRK05265.1-3"/>
    <property type="match status" value="1"/>
</dbReference>
<dbReference type="NCBIfam" id="NF003627">
    <property type="entry name" value="PRK05265.1-5"/>
    <property type="match status" value="1"/>
</dbReference>
<dbReference type="PANTHER" id="PTHR30456">
    <property type="entry name" value="PYRIDOXINE 5'-PHOSPHATE SYNTHASE"/>
    <property type="match status" value="1"/>
</dbReference>
<dbReference type="PANTHER" id="PTHR30456:SF0">
    <property type="entry name" value="PYRIDOXINE 5'-PHOSPHATE SYNTHASE"/>
    <property type="match status" value="1"/>
</dbReference>
<dbReference type="Pfam" id="PF03740">
    <property type="entry name" value="PdxJ"/>
    <property type="match status" value="1"/>
</dbReference>
<dbReference type="SUPFAM" id="SSF63892">
    <property type="entry name" value="Pyridoxine 5'-phosphate synthase"/>
    <property type="match status" value="1"/>
</dbReference>
<reference key="1">
    <citation type="journal article" date="2011" name="Stand. Genomic Sci.">
        <title>Complete genome sequence of 'Thioalkalivibrio sulfidophilus' HL-EbGr7.</title>
        <authorList>
            <person name="Muyzer G."/>
            <person name="Sorokin D.Y."/>
            <person name="Mavromatis K."/>
            <person name="Lapidus A."/>
            <person name="Clum A."/>
            <person name="Ivanova N."/>
            <person name="Pati A."/>
            <person name="d'Haeseleer P."/>
            <person name="Woyke T."/>
            <person name="Kyrpides N.C."/>
        </authorList>
    </citation>
    <scope>NUCLEOTIDE SEQUENCE [LARGE SCALE GENOMIC DNA]</scope>
    <source>
        <strain>HL-EbGR7</strain>
    </source>
</reference>
<name>PDXJ_THISH</name>
<feature type="chain" id="PRO_1000132552" description="Pyridoxine 5'-phosphate synthase">
    <location>
        <begin position="1"/>
        <end position="246"/>
    </location>
</feature>
<feature type="active site" description="Proton acceptor" evidence="1">
    <location>
        <position position="48"/>
    </location>
</feature>
<feature type="active site" description="Proton acceptor" evidence="1">
    <location>
        <position position="75"/>
    </location>
</feature>
<feature type="active site" description="Proton donor" evidence="1">
    <location>
        <position position="196"/>
    </location>
</feature>
<feature type="binding site" evidence="1">
    <location>
        <position position="12"/>
    </location>
    <ligand>
        <name>3-amino-2-oxopropyl phosphate</name>
        <dbReference type="ChEBI" id="CHEBI:57279"/>
    </ligand>
</feature>
<feature type="binding site" evidence="1">
    <location>
        <begin position="14"/>
        <end position="15"/>
    </location>
    <ligand>
        <name>1-deoxy-D-xylulose 5-phosphate</name>
        <dbReference type="ChEBI" id="CHEBI:57792"/>
    </ligand>
</feature>
<feature type="binding site" evidence="1">
    <location>
        <position position="23"/>
    </location>
    <ligand>
        <name>3-amino-2-oxopropyl phosphate</name>
        <dbReference type="ChEBI" id="CHEBI:57279"/>
    </ligand>
</feature>
<feature type="binding site" evidence="1">
    <location>
        <position position="50"/>
    </location>
    <ligand>
        <name>1-deoxy-D-xylulose 5-phosphate</name>
        <dbReference type="ChEBI" id="CHEBI:57792"/>
    </ligand>
</feature>
<feature type="binding site" evidence="1">
    <location>
        <position position="55"/>
    </location>
    <ligand>
        <name>1-deoxy-D-xylulose 5-phosphate</name>
        <dbReference type="ChEBI" id="CHEBI:57792"/>
    </ligand>
</feature>
<feature type="binding site" evidence="1">
    <location>
        <position position="105"/>
    </location>
    <ligand>
        <name>1-deoxy-D-xylulose 5-phosphate</name>
        <dbReference type="ChEBI" id="CHEBI:57792"/>
    </ligand>
</feature>
<feature type="binding site" evidence="1">
    <location>
        <position position="197"/>
    </location>
    <ligand>
        <name>3-amino-2-oxopropyl phosphate</name>
        <dbReference type="ChEBI" id="CHEBI:57279"/>
    </ligand>
</feature>
<feature type="binding site" evidence="1">
    <location>
        <begin position="218"/>
        <end position="219"/>
    </location>
    <ligand>
        <name>3-amino-2-oxopropyl phosphate</name>
        <dbReference type="ChEBI" id="CHEBI:57279"/>
    </ligand>
</feature>
<feature type="site" description="Transition state stabilizer" evidence="1">
    <location>
        <position position="156"/>
    </location>
</feature>
<organism>
    <name type="scientific">Thioalkalivibrio sulfidiphilus (strain HL-EbGR7)</name>
    <dbReference type="NCBI Taxonomy" id="396588"/>
    <lineage>
        <taxon>Bacteria</taxon>
        <taxon>Pseudomonadati</taxon>
        <taxon>Pseudomonadota</taxon>
        <taxon>Gammaproteobacteria</taxon>
        <taxon>Chromatiales</taxon>
        <taxon>Ectothiorhodospiraceae</taxon>
        <taxon>Thioalkalivibrio</taxon>
    </lineage>
</organism>
<sequence length="246" mass="26685">MNTQTALRLGVNIDHIATIRQARGTPYPDLVEAVRIVEEAGADIITLHLREDRRHIQDRDVEMLRERITTGMNLEMAATEEMQAIALRIRPQACCIVPERREELTTEGGLDVLGQEARLKAFCAPLLAAGIEVSLFVEPDLAHLDAALRIGAPVVELHTGAYASAAPGPDREAHLERIVAAAAHGHARGLVVNAGHGLDYENVLPIAAIPVMHELNIGHAIVARALFTGIGEAVRAMRAAMDRARR</sequence>
<accession>B8GPL4</accession>
<comment type="function">
    <text evidence="1">Catalyzes the complicated ring closure reaction between the two acyclic compounds 1-deoxy-D-xylulose-5-phosphate (DXP) and 3-amino-2-oxopropyl phosphate (1-amino-acetone-3-phosphate or AAP) to form pyridoxine 5'-phosphate (PNP) and inorganic phosphate.</text>
</comment>
<comment type="catalytic activity">
    <reaction evidence="1">
        <text>3-amino-2-oxopropyl phosphate + 1-deoxy-D-xylulose 5-phosphate = pyridoxine 5'-phosphate + phosphate + 2 H2O + H(+)</text>
        <dbReference type="Rhea" id="RHEA:15265"/>
        <dbReference type="ChEBI" id="CHEBI:15377"/>
        <dbReference type="ChEBI" id="CHEBI:15378"/>
        <dbReference type="ChEBI" id="CHEBI:43474"/>
        <dbReference type="ChEBI" id="CHEBI:57279"/>
        <dbReference type="ChEBI" id="CHEBI:57792"/>
        <dbReference type="ChEBI" id="CHEBI:58589"/>
        <dbReference type="EC" id="2.6.99.2"/>
    </reaction>
</comment>
<comment type="pathway">
    <text evidence="1">Cofactor biosynthesis; pyridoxine 5'-phosphate biosynthesis; pyridoxine 5'-phosphate from D-erythrose 4-phosphate: step 5/5.</text>
</comment>
<comment type="subunit">
    <text evidence="1">Homooctamer; tetramer of dimers.</text>
</comment>
<comment type="subcellular location">
    <subcellularLocation>
        <location evidence="1">Cytoplasm</location>
    </subcellularLocation>
</comment>
<comment type="similarity">
    <text evidence="1">Belongs to the PNP synthase family.</text>
</comment>
<gene>
    <name evidence="1" type="primary">pdxJ</name>
    <name type="ordered locus">Tgr7_1095</name>
</gene>
<evidence type="ECO:0000255" key="1">
    <source>
        <dbReference type="HAMAP-Rule" id="MF_00279"/>
    </source>
</evidence>
<proteinExistence type="inferred from homology"/>
<protein>
    <recommendedName>
        <fullName evidence="1">Pyridoxine 5'-phosphate synthase</fullName>
        <shortName evidence="1">PNP synthase</shortName>
        <ecNumber evidence="1">2.6.99.2</ecNumber>
    </recommendedName>
</protein>
<keyword id="KW-0963">Cytoplasm</keyword>
<keyword id="KW-0664">Pyridoxine biosynthesis</keyword>
<keyword id="KW-1185">Reference proteome</keyword>
<keyword id="KW-0808">Transferase</keyword>